<comment type="function">
    <text evidence="2">Peptidoglycan polymerase that is essential for cell division.</text>
</comment>
<comment type="catalytic activity">
    <reaction evidence="2">
        <text>[GlcNAc-(1-&gt;4)-Mur2Ac(oyl-L-Ala-gamma-D-Glu-L-Lys-D-Ala-D-Ala)](n)-di-trans,octa-cis-undecaprenyl diphosphate + beta-D-GlcNAc-(1-&gt;4)-Mur2Ac(oyl-L-Ala-gamma-D-Glu-L-Lys-D-Ala-D-Ala)-di-trans,octa-cis-undecaprenyl diphosphate = [GlcNAc-(1-&gt;4)-Mur2Ac(oyl-L-Ala-gamma-D-Glu-L-Lys-D-Ala-D-Ala)](n+1)-di-trans,octa-cis-undecaprenyl diphosphate + di-trans,octa-cis-undecaprenyl diphosphate + H(+)</text>
        <dbReference type="Rhea" id="RHEA:23708"/>
        <dbReference type="Rhea" id="RHEA-COMP:9602"/>
        <dbReference type="Rhea" id="RHEA-COMP:9603"/>
        <dbReference type="ChEBI" id="CHEBI:15378"/>
        <dbReference type="ChEBI" id="CHEBI:58405"/>
        <dbReference type="ChEBI" id="CHEBI:60033"/>
        <dbReference type="ChEBI" id="CHEBI:78435"/>
        <dbReference type="EC" id="2.4.99.28"/>
    </reaction>
</comment>
<comment type="pathway">
    <text evidence="2">Cell wall biogenesis; peptidoglycan biosynthesis.</text>
</comment>
<comment type="subcellular location">
    <subcellularLocation>
        <location evidence="2">Cell inner membrane</location>
        <topology evidence="2">Multi-pass membrane protein</topology>
    </subcellularLocation>
    <text evidence="2">Localizes to the division septum.</text>
</comment>
<comment type="similarity">
    <text evidence="2">Belongs to the SEDS family. FtsW subfamily.</text>
</comment>
<protein>
    <recommendedName>
        <fullName evidence="2">Probable peptidoglycan glycosyltransferase FtsW</fullName>
        <shortName evidence="2">PGT</shortName>
        <ecNumber evidence="2">2.4.99.28</ecNumber>
    </recommendedName>
    <alternativeName>
        <fullName evidence="2">Cell division protein FtsW</fullName>
    </alternativeName>
    <alternativeName>
        <fullName evidence="2">Cell wall polymerase</fullName>
    </alternativeName>
    <alternativeName>
        <fullName evidence="2">Peptidoglycan polymerase</fullName>
        <shortName evidence="2">PG polymerase</shortName>
    </alternativeName>
</protein>
<accession>A1WYU4</accession>
<gene>
    <name evidence="2" type="primary">ftsW</name>
    <name type="ordered locus">Hhal_2092</name>
</gene>
<sequence length="395" mass="42218">MADLAAGVAERGPRLSLWSSLDQRLVWVVAATALLGLVMVASASISMAEQATGDPFYFFKRQIFFALLGLGMALALLQIPLATWERAGPGLLLGALALLVLVLIPGVGREVNGAVRWIPLGVFNLQVAEVVKVLLALYLAGFLVRRQQQLRTSMAAFLVPVLVSAACAFLLLLQPDFGTALMLMALAVGLLYLAGAPLWRFAALVGVLAAAAAALVVYSPYRWQRVTAFMDPWSDPFNTGFQLTQSLIAIGRGDWLGVGLGGSVQKLFYLPEAHTDFVFSVLAEELGWLGVLAVVLLFSYIVWRAMAVGWQCHRHRLPFAGYLAWAVGLALGLQAFINMGVATGLLPTKGLTLPLFSYGGSSALATGAMVGLLLRCGYELAQARAEGRRPEEAAS</sequence>
<organism>
    <name type="scientific">Halorhodospira halophila (strain DSM 244 / SL1)</name>
    <name type="common">Ectothiorhodospira halophila (strain DSM 244 / SL1)</name>
    <dbReference type="NCBI Taxonomy" id="349124"/>
    <lineage>
        <taxon>Bacteria</taxon>
        <taxon>Pseudomonadati</taxon>
        <taxon>Pseudomonadota</taxon>
        <taxon>Gammaproteobacteria</taxon>
        <taxon>Chromatiales</taxon>
        <taxon>Ectothiorhodospiraceae</taxon>
        <taxon>Halorhodospira</taxon>
    </lineage>
</organism>
<reference key="1">
    <citation type="submission" date="2006-12" db="EMBL/GenBank/DDBJ databases">
        <title>Complete sequence of Halorhodospira halophila SL1.</title>
        <authorList>
            <consortium name="US DOE Joint Genome Institute"/>
            <person name="Copeland A."/>
            <person name="Lucas S."/>
            <person name="Lapidus A."/>
            <person name="Barry K."/>
            <person name="Detter J.C."/>
            <person name="Glavina del Rio T."/>
            <person name="Hammon N."/>
            <person name="Israni S."/>
            <person name="Dalin E."/>
            <person name="Tice H."/>
            <person name="Pitluck S."/>
            <person name="Saunders E."/>
            <person name="Brettin T."/>
            <person name="Bruce D."/>
            <person name="Han C."/>
            <person name="Tapia R."/>
            <person name="Schmutz J."/>
            <person name="Larimer F."/>
            <person name="Land M."/>
            <person name="Hauser L."/>
            <person name="Kyrpides N."/>
            <person name="Mikhailova N."/>
            <person name="Hoff W."/>
            <person name="Richardson P."/>
        </authorList>
    </citation>
    <scope>NUCLEOTIDE SEQUENCE [LARGE SCALE GENOMIC DNA]</scope>
    <source>
        <strain>DSM 244 / SL1</strain>
    </source>
</reference>
<evidence type="ECO:0000255" key="1"/>
<evidence type="ECO:0000255" key="2">
    <source>
        <dbReference type="HAMAP-Rule" id="MF_00913"/>
    </source>
</evidence>
<keyword id="KW-0131">Cell cycle</keyword>
<keyword id="KW-0132">Cell division</keyword>
<keyword id="KW-0997">Cell inner membrane</keyword>
<keyword id="KW-1003">Cell membrane</keyword>
<keyword id="KW-0133">Cell shape</keyword>
<keyword id="KW-0961">Cell wall biogenesis/degradation</keyword>
<keyword id="KW-0328">Glycosyltransferase</keyword>
<keyword id="KW-0472">Membrane</keyword>
<keyword id="KW-0573">Peptidoglycan synthesis</keyword>
<keyword id="KW-1185">Reference proteome</keyword>
<keyword id="KW-0808">Transferase</keyword>
<keyword id="KW-0812">Transmembrane</keyword>
<keyword id="KW-1133">Transmembrane helix</keyword>
<name>FTSW_HALHL</name>
<dbReference type="EC" id="2.4.99.28" evidence="2"/>
<dbReference type="EMBL" id="CP000544">
    <property type="protein sequence ID" value="ABM62856.1"/>
    <property type="molecule type" value="Genomic_DNA"/>
</dbReference>
<dbReference type="RefSeq" id="WP_011814878.1">
    <property type="nucleotide sequence ID" value="NC_008789.1"/>
</dbReference>
<dbReference type="SMR" id="A1WYU4"/>
<dbReference type="STRING" id="349124.Hhal_2092"/>
<dbReference type="KEGG" id="hha:Hhal_2092"/>
<dbReference type="eggNOG" id="COG0772">
    <property type="taxonomic scope" value="Bacteria"/>
</dbReference>
<dbReference type="HOGENOM" id="CLU_029243_1_1_6"/>
<dbReference type="OrthoDB" id="9768187at2"/>
<dbReference type="UniPathway" id="UPA00219"/>
<dbReference type="Proteomes" id="UP000000647">
    <property type="component" value="Chromosome"/>
</dbReference>
<dbReference type="GO" id="GO:0032153">
    <property type="term" value="C:cell division site"/>
    <property type="evidence" value="ECO:0007669"/>
    <property type="project" value="UniProtKB-UniRule"/>
</dbReference>
<dbReference type="GO" id="GO:0005886">
    <property type="term" value="C:plasma membrane"/>
    <property type="evidence" value="ECO:0007669"/>
    <property type="project" value="UniProtKB-SubCell"/>
</dbReference>
<dbReference type="GO" id="GO:0015648">
    <property type="term" value="F:lipid-linked peptidoglycan transporter activity"/>
    <property type="evidence" value="ECO:0007669"/>
    <property type="project" value="TreeGrafter"/>
</dbReference>
<dbReference type="GO" id="GO:0008955">
    <property type="term" value="F:peptidoglycan glycosyltransferase activity"/>
    <property type="evidence" value="ECO:0007669"/>
    <property type="project" value="UniProtKB-UniRule"/>
</dbReference>
<dbReference type="GO" id="GO:0071555">
    <property type="term" value="P:cell wall organization"/>
    <property type="evidence" value="ECO:0007669"/>
    <property type="project" value="UniProtKB-KW"/>
</dbReference>
<dbReference type="GO" id="GO:0043093">
    <property type="term" value="P:FtsZ-dependent cytokinesis"/>
    <property type="evidence" value="ECO:0007669"/>
    <property type="project" value="UniProtKB-UniRule"/>
</dbReference>
<dbReference type="GO" id="GO:0009252">
    <property type="term" value="P:peptidoglycan biosynthetic process"/>
    <property type="evidence" value="ECO:0007669"/>
    <property type="project" value="UniProtKB-UniRule"/>
</dbReference>
<dbReference type="GO" id="GO:0008360">
    <property type="term" value="P:regulation of cell shape"/>
    <property type="evidence" value="ECO:0007669"/>
    <property type="project" value="UniProtKB-KW"/>
</dbReference>
<dbReference type="HAMAP" id="MF_00913">
    <property type="entry name" value="PGT_FtsW_proteobact"/>
    <property type="match status" value="1"/>
</dbReference>
<dbReference type="InterPro" id="IPR018365">
    <property type="entry name" value="Cell_cycle_FtsW-rel_CS"/>
</dbReference>
<dbReference type="InterPro" id="IPR013437">
    <property type="entry name" value="FtsW"/>
</dbReference>
<dbReference type="InterPro" id="IPR001182">
    <property type="entry name" value="FtsW/RodA"/>
</dbReference>
<dbReference type="NCBIfam" id="TIGR02614">
    <property type="entry name" value="ftsW"/>
    <property type="match status" value="1"/>
</dbReference>
<dbReference type="PANTHER" id="PTHR30474">
    <property type="entry name" value="CELL CYCLE PROTEIN"/>
    <property type="match status" value="1"/>
</dbReference>
<dbReference type="PANTHER" id="PTHR30474:SF2">
    <property type="entry name" value="PEPTIDOGLYCAN GLYCOSYLTRANSFERASE FTSW-RELATED"/>
    <property type="match status" value="1"/>
</dbReference>
<dbReference type="Pfam" id="PF01098">
    <property type="entry name" value="FTSW_RODA_SPOVE"/>
    <property type="match status" value="1"/>
</dbReference>
<dbReference type="PROSITE" id="PS00428">
    <property type="entry name" value="FTSW_RODA_SPOVE"/>
    <property type="match status" value="1"/>
</dbReference>
<feature type="chain" id="PRO_0000415190" description="Probable peptidoglycan glycosyltransferase FtsW">
    <location>
        <begin position="1"/>
        <end position="395"/>
    </location>
</feature>
<feature type="topological domain" description="Cytoplasmic" evidence="1">
    <location>
        <begin position="1"/>
        <end position="24"/>
    </location>
</feature>
<feature type="transmembrane region" description="Helical" evidence="2">
    <location>
        <begin position="25"/>
        <end position="45"/>
    </location>
</feature>
<feature type="topological domain" description="Periplasmic" evidence="1">
    <location>
        <begin position="46"/>
        <end position="62"/>
    </location>
</feature>
<feature type="transmembrane region" description="Helical" evidence="2">
    <location>
        <begin position="63"/>
        <end position="83"/>
    </location>
</feature>
<feature type="topological domain" description="Cytoplasmic" evidence="1">
    <location>
        <begin position="84"/>
        <end position="86"/>
    </location>
</feature>
<feature type="transmembrane region" description="Helical" evidence="2">
    <location>
        <begin position="87"/>
        <end position="107"/>
    </location>
</feature>
<feature type="topological domain" description="Periplasmic" evidence="1">
    <location>
        <begin position="108"/>
        <end position="116"/>
    </location>
</feature>
<feature type="transmembrane region" description="Helical" evidence="2">
    <location>
        <begin position="117"/>
        <end position="137"/>
    </location>
</feature>
<feature type="topological domain" description="Cytoplasmic" evidence="1">
    <location>
        <begin position="138"/>
        <end position="152"/>
    </location>
</feature>
<feature type="transmembrane region" description="Helical" evidence="2">
    <location>
        <begin position="153"/>
        <end position="173"/>
    </location>
</feature>
<feature type="topological domain" description="Periplasmic" evidence="1">
    <location>
        <begin position="174"/>
        <end position="178"/>
    </location>
</feature>
<feature type="transmembrane region" description="Helical" evidence="2">
    <location>
        <begin position="179"/>
        <end position="199"/>
    </location>
</feature>
<feature type="topological domain" description="Cytoplasmic" evidence="1">
    <location>
        <position position="200"/>
    </location>
</feature>
<feature type="transmembrane region" description="Helical" evidence="2">
    <location>
        <begin position="201"/>
        <end position="221"/>
    </location>
</feature>
<feature type="topological domain" description="Periplasmic" evidence="1">
    <location>
        <begin position="222"/>
        <end position="276"/>
    </location>
</feature>
<feature type="transmembrane region" description="Helical" evidence="2">
    <location>
        <begin position="277"/>
        <end position="297"/>
    </location>
</feature>
<feature type="topological domain" description="Cytoplasmic" evidence="1">
    <location>
        <begin position="298"/>
        <end position="316"/>
    </location>
</feature>
<feature type="transmembrane region" description="Helical" evidence="2">
    <location>
        <begin position="317"/>
        <end position="337"/>
    </location>
</feature>
<feature type="topological domain" description="Periplasmic" evidence="1">
    <location>
        <begin position="338"/>
        <end position="352"/>
    </location>
</feature>
<feature type="transmembrane region" description="Helical" evidence="2">
    <location>
        <begin position="353"/>
        <end position="373"/>
    </location>
</feature>
<feature type="topological domain" description="Cytoplasmic" evidence="1">
    <location>
        <begin position="374"/>
        <end position="395"/>
    </location>
</feature>
<proteinExistence type="inferred from homology"/>